<protein>
    <recommendedName>
        <fullName evidence="1">Thymidylate kinase</fullName>
        <ecNumber evidence="1">2.7.4.9</ecNumber>
    </recommendedName>
    <alternativeName>
        <fullName evidence="1">dTMP kinase</fullName>
    </alternativeName>
</protein>
<proteinExistence type="inferred from homology"/>
<sequence>MPKPIFISFEGPEGAGKTSVLEALISELKTKLGDDLVTTREPGGNPISEAIRSILQPEEDNGMDKRTEALLYTAARRQHLVENIKPALDQNKIVISDRYVDSSLAYQGGGRGLGIDNIWEINQFAIDGLLPDMTIYLDVPVEIGLARVNENRQGKIDRLDKESISFHQKVRETYLKLQSEFSDRIKIVDATQPLNKVIDDTRILINQILEDKS</sequence>
<feature type="chain" id="PRO_1000023218" description="Thymidylate kinase">
    <location>
        <begin position="1"/>
        <end position="213"/>
    </location>
</feature>
<feature type="binding site" evidence="1">
    <location>
        <begin position="11"/>
        <end position="18"/>
    </location>
    <ligand>
        <name>ATP</name>
        <dbReference type="ChEBI" id="CHEBI:30616"/>
    </ligand>
</feature>
<evidence type="ECO:0000255" key="1">
    <source>
        <dbReference type="HAMAP-Rule" id="MF_00165"/>
    </source>
</evidence>
<reference key="1">
    <citation type="journal article" date="2006" name="Proc. Natl. Acad. Sci. U.S.A.">
        <title>Comparative genomics of the lactic acid bacteria.</title>
        <authorList>
            <person name="Makarova K.S."/>
            <person name="Slesarev A."/>
            <person name="Wolf Y.I."/>
            <person name="Sorokin A."/>
            <person name="Mirkin B."/>
            <person name="Koonin E.V."/>
            <person name="Pavlov A."/>
            <person name="Pavlova N."/>
            <person name="Karamychev V."/>
            <person name="Polouchine N."/>
            <person name="Shakhova V."/>
            <person name="Grigoriev I."/>
            <person name="Lou Y."/>
            <person name="Rohksar D."/>
            <person name="Lucas S."/>
            <person name="Huang K."/>
            <person name="Goodstein D.M."/>
            <person name="Hawkins T."/>
            <person name="Plengvidhya V."/>
            <person name="Welker D."/>
            <person name="Hughes J."/>
            <person name="Goh Y."/>
            <person name="Benson A."/>
            <person name="Baldwin K."/>
            <person name="Lee J.-H."/>
            <person name="Diaz-Muniz I."/>
            <person name="Dosti B."/>
            <person name="Smeianov V."/>
            <person name="Wechter W."/>
            <person name="Barabote R."/>
            <person name="Lorca G."/>
            <person name="Altermann E."/>
            <person name="Barrangou R."/>
            <person name="Ganesan B."/>
            <person name="Xie Y."/>
            <person name="Rawsthorne H."/>
            <person name="Tamir D."/>
            <person name="Parker C."/>
            <person name="Breidt F."/>
            <person name="Broadbent J.R."/>
            <person name="Hutkins R."/>
            <person name="O'Sullivan D."/>
            <person name="Steele J."/>
            <person name="Unlu G."/>
            <person name="Saier M.H. Jr."/>
            <person name="Klaenhammer T."/>
            <person name="Richardson P."/>
            <person name="Kozyavkin S."/>
            <person name="Weimer B.C."/>
            <person name="Mills D.A."/>
        </authorList>
    </citation>
    <scope>NUCLEOTIDE SEQUENCE [LARGE SCALE GENOMIC DNA]</scope>
    <source>
        <strain>ATCC 8293 / DSM 20343 / BCRC 11652 / CCM 1803 / JCM 6124 / NCDO 523 / NBRC 100496 / NCIMB 8023 / NCTC 12954 / NRRL B-1118 / 37Y</strain>
    </source>
</reference>
<accession>Q03ZG6</accession>
<comment type="function">
    <text evidence="1">Phosphorylation of dTMP to form dTDP in both de novo and salvage pathways of dTTP synthesis.</text>
</comment>
<comment type="catalytic activity">
    <reaction evidence="1">
        <text>dTMP + ATP = dTDP + ADP</text>
        <dbReference type="Rhea" id="RHEA:13517"/>
        <dbReference type="ChEBI" id="CHEBI:30616"/>
        <dbReference type="ChEBI" id="CHEBI:58369"/>
        <dbReference type="ChEBI" id="CHEBI:63528"/>
        <dbReference type="ChEBI" id="CHEBI:456216"/>
        <dbReference type="EC" id="2.7.4.9"/>
    </reaction>
</comment>
<comment type="similarity">
    <text evidence="1">Belongs to the thymidylate kinase family.</text>
</comment>
<keyword id="KW-0067">ATP-binding</keyword>
<keyword id="KW-0418">Kinase</keyword>
<keyword id="KW-0545">Nucleotide biosynthesis</keyword>
<keyword id="KW-0547">Nucleotide-binding</keyword>
<keyword id="KW-1185">Reference proteome</keyword>
<keyword id="KW-0808">Transferase</keyword>
<organism>
    <name type="scientific">Leuconostoc mesenteroides subsp. mesenteroides (strain ATCC 8293 / DSM 20343 / BCRC 11652 / CCM 1803 / JCM 6124 / NCDO 523 / NBRC 100496 / NCIMB 8023 / NCTC 12954 / NRRL B-1118 / 37Y)</name>
    <dbReference type="NCBI Taxonomy" id="203120"/>
    <lineage>
        <taxon>Bacteria</taxon>
        <taxon>Bacillati</taxon>
        <taxon>Bacillota</taxon>
        <taxon>Bacilli</taxon>
        <taxon>Lactobacillales</taxon>
        <taxon>Lactobacillaceae</taxon>
        <taxon>Leuconostoc</taxon>
    </lineage>
</organism>
<gene>
    <name evidence="1" type="primary">tmk</name>
    <name type="ordered locus">LEUM_0279</name>
</gene>
<dbReference type="EC" id="2.7.4.9" evidence="1"/>
<dbReference type="EMBL" id="CP000414">
    <property type="protein sequence ID" value="ABJ61406.1"/>
    <property type="molecule type" value="Genomic_DNA"/>
</dbReference>
<dbReference type="RefSeq" id="WP_002815927.1">
    <property type="nucleotide sequence ID" value="NC_008531.1"/>
</dbReference>
<dbReference type="SMR" id="Q03ZG6"/>
<dbReference type="EnsemblBacteria" id="ABJ61406">
    <property type="protein sequence ID" value="ABJ61406"/>
    <property type="gene ID" value="LEUM_0279"/>
</dbReference>
<dbReference type="GeneID" id="29576237"/>
<dbReference type="KEGG" id="lme:LEUM_0279"/>
<dbReference type="eggNOG" id="COG0125">
    <property type="taxonomic scope" value="Bacteria"/>
</dbReference>
<dbReference type="HOGENOM" id="CLU_049131_0_2_9"/>
<dbReference type="Proteomes" id="UP000000362">
    <property type="component" value="Chromosome"/>
</dbReference>
<dbReference type="GO" id="GO:0005829">
    <property type="term" value="C:cytosol"/>
    <property type="evidence" value="ECO:0007669"/>
    <property type="project" value="TreeGrafter"/>
</dbReference>
<dbReference type="GO" id="GO:0005524">
    <property type="term" value="F:ATP binding"/>
    <property type="evidence" value="ECO:0007669"/>
    <property type="project" value="UniProtKB-UniRule"/>
</dbReference>
<dbReference type="GO" id="GO:0004798">
    <property type="term" value="F:dTMP kinase activity"/>
    <property type="evidence" value="ECO:0007669"/>
    <property type="project" value="UniProtKB-UniRule"/>
</dbReference>
<dbReference type="GO" id="GO:0006233">
    <property type="term" value="P:dTDP biosynthetic process"/>
    <property type="evidence" value="ECO:0007669"/>
    <property type="project" value="InterPro"/>
</dbReference>
<dbReference type="GO" id="GO:0006235">
    <property type="term" value="P:dTTP biosynthetic process"/>
    <property type="evidence" value="ECO:0007669"/>
    <property type="project" value="UniProtKB-UniRule"/>
</dbReference>
<dbReference type="GO" id="GO:0006227">
    <property type="term" value="P:dUDP biosynthetic process"/>
    <property type="evidence" value="ECO:0007669"/>
    <property type="project" value="TreeGrafter"/>
</dbReference>
<dbReference type="CDD" id="cd01672">
    <property type="entry name" value="TMPK"/>
    <property type="match status" value="1"/>
</dbReference>
<dbReference type="FunFam" id="3.40.50.300:FF:000225">
    <property type="entry name" value="Thymidylate kinase"/>
    <property type="match status" value="1"/>
</dbReference>
<dbReference type="Gene3D" id="3.40.50.300">
    <property type="entry name" value="P-loop containing nucleotide triphosphate hydrolases"/>
    <property type="match status" value="1"/>
</dbReference>
<dbReference type="HAMAP" id="MF_00165">
    <property type="entry name" value="Thymidylate_kinase"/>
    <property type="match status" value="1"/>
</dbReference>
<dbReference type="InterPro" id="IPR027417">
    <property type="entry name" value="P-loop_NTPase"/>
</dbReference>
<dbReference type="InterPro" id="IPR039430">
    <property type="entry name" value="Thymidylate_kin-like_dom"/>
</dbReference>
<dbReference type="InterPro" id="IPR018095">
    <property type="entry name" value="Thymidylate_kin_CS"/>
</dbReference>
<dbReference type="InterPro" id="IPR018094">
    <property type="entry name" value="Thymidylate_kinase"/>
</dbReference>
<dbReference type="NCBIfam" id="TIGR00041">
    <property type="entry name" value="DTMP_kinase"/>
    <property type="match status" value="1"/>
</dbReference>
<dbReference type="PANTHER" id="PTHR10344">
    <property type="entry name" value="THYMIDYLATE KINASE"/>
    <property type="match status" value="1"/>
</dbReference>
<dbReference type="PANTHER" id="PTHR10344:SF4">
    <property type="entry name" value="UMP-CMP KINASE 2, MITOCHONDRIAL"/>
    <property type="match status" value="1"/>
</dbReference>
<dbReference type="Pfam" id="PF02223">
    <property type="entry name" value="Thymidylate_kin"/>
    <property type="match status" value="1"/>
</dbReference>
<dbReference type="SUPFAM" id="SSF52540">
    <property type="entry name" value="P-loop containing nucleoside triphosphate hydrolases"/>
    <property type="match status" value="1"/>
</dbReference>
<dbReference type="PROSITE" id="PS01331">
    <property type="entry name" value="THYMIDYLATE_KINASE"/>
    <property type="match status" value="1"/>
</dbReference>
<name>KTHY_LEUMM</name>